<sequence>MENSNLFSFFVPLVGLVFSAIIMVLSFLYIQKDSVN</sequence>
<geneLocation type="chloroplast"/>
<dbReference type="EMBL" id="EU342371">
    <property type="protein sequence ID" value="ABY26799.1"/>
    <property type="molecule type" value="Genomic_DNA"/>
</dbReference>
<dbReference type="EMBL" id="AP009568">
    <property type="protein sequence ID" value="BAH11219.1"/>
    <property type="molecule type" value="Genomic_DNA"/>
</dbReference>
<dbReference type="RefSeq" id="YP_001876586.1">
    <property type="nucleotide sequence ID" value="NC_010654.1"/>
</dbReference>
<dbReference type="SMR" id="B2Y1W9"/>
<dbReference type="GeneID" id="6276266"/>
<dbReference type="GO" id="GO:0009535">
    <property type="term" value="C:chloroplast thylakoid membrane"/>
    <property type="evidence" value="ECO:0007669"/>
    <property type="project" value="UniProtKB-SubCell"/>
</dbReference>
<dbReference type="GO" id="GO:0009522">
    <property type="term" value="C:photosystem I"/>
    <property type="evidence" value="ECO:0007669"/>
    <property type="project" value="UniProtKB-KW"/>
</dbReference>
<dbReference type="GO" id="GO:0015979">
    <property type="term" value="P:photosynthesis"/>
    <property type="evidence" value="ECO:0007669"/>
    <property type="project" value="UniProtKB-UniRule"/>
</dbReference>
<dbReference type="HAMAP" id="MF_00431">
    <property type="entry name" value="PSI_PsaI"/>
    <property type="match status" value="1"/>
</dbReference>
<dbReference type="InterPro" id="IPR001302">
    <property type="entry name" value="PSI_PsaI"/>
</dbReference>
<dbReference type="InterPro" id="IPR036357">
    <property type="entry name" value="PSI_PsaI_sf"/>
</dbReference>
<dbReference type="NCBIfam" id="TIGR03052">
    <property type="entry name" value="PS_I_psaI"/>
    <property type="match status" value="1"/>
</dbReference>
<dbReference type="PANTHER" id="PTHR35775">
    <property type="match status" value="1"/>
</dbReference>
<dbReference type="PANTHER" id="PTHR35775:SF2">
    <property type="entry name" value="PHOTOSYSTEM I REACTION CENTER SUBUNIT VIII"/>
    <property type="match status" value="1"/>
</dbReference>
<dbReference type="Pfam" id="PF00796">
    <property type="entry name" value="PSI_8"/>
    <property type="match status" value="1"/>
</dbReference>
<dbReference type="SUPFAM" id="SSF81540">
    <property type="entry name" value="Subunit VIII of photosystem I reaction centre, PsaI"/>
    <property type="match status" value="1"/>
</dbReference>
<evidence type="ECO:0000255" key="1">
    <source>
        <dbReference type="HAMAP-Rule" id="MF_00431"/>
    </source>
</evidence>
<feature type="chain" id="PRO_1000134938" description="Photosystem I reaction center subunit VIII">
    <location>
        <begin position="1"/>
        <end position="36"/>
    </location>
</feature>
<feature type="transmembrane region" description="Helical" evidence="1">
    <location>
        <begin position="10"/>
        <end position="30"/>
    </location>
</feature>
<proteinExistence type="inferred from homology"/>
<organism>
    <name type="scientific">Welwitschia mirabilis</name>
    <name type="common">Tree tumbo</name>
    <name type="synonym">Welwitschia bainesii</name>
    <dbReference type="NCBI Taxonomy" id="3377"/>
    <lineage>
        <taxon>Eukaryota</taxon>
        <taxon>Viridiplantae</taxon>
        <taxon>Streptophyta</taxon>
        <taxon>Embryophyta</taxon>
        <taxon>Tracheophyta</taxon>
        <taxon>Spermatophyta</taxon>
        <taxon>Gnetopsida</taxon>
        <taxon>Gnetidae</taxon>
        <taxon>Welwitschiales</taxon>
        <taxon>Welwitschiaceae</taxon>
        <taxon>Welwitschia</taxon>
    </lineage>
</organism>
<name>PSAI_WELMI</name>
<protein>
    <recommendedName>
        <fullName evidence="1">Photosystem I reaction center subunit VIII</fullName>
        <shortName evidence="1">PSI-I</shortName>
    </recommendedName>
</protein>
<gene>
    <name evidence="1" type="primary">psaI</name>
</gene>
<accession>B2Y1W9</accession>
<comment type="function">
    <text evidence="1">May help in the organization of the PsaL subunit.</text>
</comment>
<comment type="subcellular location">
    <subcellularLocation>
        <location evidence="1">Plastid</location>
        <location evidence="1">Chloroplast thylakoid membrane</location>
        <topology evidence="1">Single-pass membrane protein</topology>
    </subcellularLocation>
</comment>
<comment type="similarity">
    <text evidence="1">Belongs to the PsaI family.</text>
</comment>
<reference key="1">
    <citation type="journal article" date="2008" name="BMC Evol. Biol.">
        <title>The complete plastid genome sequence of Welwitschia mirabilis: an unusually compact plastome with accelerated divergence rates.</title>
        <authorList>
            <person name="McCoy S.R."/>
            <person name="Kuehl J.V."/>
            <person name="Boore J.L."/>
            <person name="Raubeson L.A."/>
        </authorList>
    </citation>
    <scope>NUCLEOTIDE SEQUENCE [LARGE SCALE GENOMIC DNA]</scope>
</reference>
<reference key="2">
    <citation type="journal article" date="2009" name="Mol. Phylogenet. Evol.">
        <title>Evolution of reduced and compact chloroplast genomes (cpDNAs) in gnetophytes: Selection toward a lower-cost strategy.</title>
        <authorList>
            <person name="Wu C.-S."/>
            <person name="Lai Y.-T."/>
            <person name="Lin C.-P."/>
            <person name="Wang Y.-N."/>
            <person name="Chaw S.-M."/>
        </authorList>
    </citation>
    <scope>NUCLEOTIDE SEQUENCE [LARGE SCALE GENOMIC DNA]</scope>
</reference>
<keyword id="KW-0150">Chloroplast</keyword>
<keyword id="KW-0472">Membrane</keyword>
<keyword id="KW-0602">Photosynthesis</keyword>
<keyword id="KW-0603">Photosystem I</keyword>
<keyword id="KW-0934">Plastid</keyword>
<keyword id="KW-0793">Thylakoid</keyword>
<keyword id="KW-0812">Transmembrane</keyword>
<keyword id="KW-1133">Transmembrane helix</keyword>